<gene>
    <name type="primary">RABGGTA</name>
</gene>
<comment type="function">
    <text evidence="1">Catalyzes the transfer of a geranylgeranyl moiety from geranylgeranyl diphosphate to both cysteines of Rab proteins with the C-terminal sequence -XXCC, -XCXC and -CCXX, such as RAB1A, RAB3A, RAB5A and RAB7A.</text>
</comment>
<comment type="catalytic activity">
    <reaction>
        <text>geranylgeranyl diphosphate + L-cysteinyl-[protein] = S-geranylgeranyl-L-cysteinyl-[protein] + diphosphate</text>
        <dbReference type="Rhea" id="RHEA:21240"/>
        <dbReference type="Rhea" id="RHEA-COMP:10131"/>
        <dbReference type="Rhea" id="RHEA-COMP:11537"/>
        <dbReference type="ChEBI" id="CHEBI:29950"/>
        <dbReference type="ChEBI" id="CHEBI:33019"/>
        <dbReference type="ChEBI" id="CHEBI:57533"/>
        <dbReference type="ChEBI" id="CHEBI:86021"/>
        <dbReference type="EC" id="2.5.1.60"/>
    </reaction>
</comment>
<comment type="activity regulation">
    <text evidence="1">The enzymatic reaction requires the aid of a Rab escort protein (also called component A), such as CHM.</text>
</comment>
<comment type="subunit">
    <text evidence="2">Heterotrimer composed of RABGGTA, RABGGTB and CHM; within this trimer, RABGGTA and RABGGTB form the catalytic component B, while CHM (component A) mediates peptide substrate binding. The Rab GGTase dimer (RGGT) interacts with CHM (component A) prior to Rab protein binding; the association is stabilized by geranylgeranyl pyrophosphate (GGpp). The CHM:RGGT:Rab complex is destabilized by GGpp. Interacts with non-phosphorylated form of RAB8A; phosphorylation of RAB8A at 'Thr-72' disrupts this interaction.</text>
</comment>
<comment type="similarity">
    <text evidence="4">Belongs to the protein prenyltransferase subunit alpha family.</text>
</comment>
<keyword id="KW-0433">Leucine-rich repeat</keyword>
<keyword id="KW-0597">Phosphoprotein</keyword>
<keyword id="KW-0637">Prenyltransferase</keyword>
<keyword id="KW-1185">Reference proteome</keyword>
<keyword id="KW-0677">Repeat</keyword>
<keyword id="KW-0808">Transferase</keyword>
<reference key="1">
    <citation type="submission" date="2004-11" db="EMBL/GenBank/DDBJ databases">
        <authorList>
            <consortium name="The German cDNA consortium"/>
        </authorList>
    </citation>
    <scope>NUCLEOTIDE SEQUENCE [LARGE SCALE MRNA]</scope>
    <source>
        <tissue>Brain cortex</tissue>
    </source>
</reference>
<organism>
    <name type="scientific">Pongo abelii</name>
    <name type="common">Sumatran orangutan</name>
    <name type="synonym">Pongo pygmaeus abelii</name>
    <dbReference type="NCBI Taxonomy" id="9601"/>
    <lineage>
        <taxon>Eukaryota</taxon>
        <taxon>Metazoa</taxon>
        <taxon>Chordata</taxon>
        <taxon>Craniata</taxon>
        <taxon>Vertebrata</taxon>
        <taxon>Euteleostomi</taxon>
        <taxon>Mammalia</taxon>
        <taxon>Eutheria</taxon>
        <taxon>Euarchontoglires</taxon>
        <taxon>Primates</taxon>
        <taxon>Haplorrhini</taxon>
        <taxon>Catarrhini</taxon>
        <taxon>Hominidae</taxon>
        <taxon>Pongo</taxon>
    </lineage>
</organism>
<name>PGTA_PONAB</name>
<dbReference type="EC" id="2.5.1.60"/>
<dbReference type="EMBL" id="CR926021">
    <property type="protein sequence ID" value="CAI29658.1"/>
    <property type="molecule type" value="mRNA"/>
</dbReference>
<dbReference type="RefSeq" id="NP_001127096.1">
    <property type="nucleotide sequence ID" value="NM_001133624.1"/>
</dbReference>
<dbReference type="SMR" id="Q5NVK5"/>
<dbReference type="FunCoup" id="Q5NVK5">
    <property type="interactions" value="1587"/>
</dbReference>
<dbReference type="STRING" id="9601.ENSPPYP00000006478"/>
<dbReference type="GeneID" id="100174130"/>
<dbReference type="KEGG" id="pon:100174130"/>
<dbReference type="CTD" id="5875"/>
<dbReference type="eggNOG" id="KOG0529">
    <property type="taxonomic scope" value="Eukaryota"/>
</dbReference>
<dbReference type="InParanoid" id="Q5NVK5"/>
<dbReference type="OrthoDB" id="1658at2759"/>
<dbReference type="Proteomes" id="UP000001595">
    <property type="component" value="Unplaced"/>
</dbReference>
<dbReference type="GO" id="GO:0005968">
    <property type="term" value="C:Rab-protein geranylgeranyltransferase complex"/>
    <property type="evidence" value="ECO:0000250"/>
    <property type="project" value="UniProtKB"/>
</dbReference>
<dbReference type="GO" id="GO:0004663">
    <property type="term" value="F:Rab geranylgeranyltransferase activity"/>
    <property type="evidence" value="ECO:0000250"/>
    <property type="project" value="UniProtKB"/>
</dbReference>
<dbReference type="GO" id="GO:0031267">
    <property type="term" value="F:small GTPase binding"/>
    <property type="evidence" value="ECO:0000250"/>
    <property type="project" value="UniProtKB"/>
</dbReference>
<dbReference type="GO" id="GO:0008270">
    <property type="term" value="F:zinc ion binding"/>
    <property type="evidence" value="ECO:0007669"/>
    <property type="project" value="InterPro"/>
</dbReference>
<dbReference type="GO" id="GO:0018344">
    <property type="term" value="P:protein geranylgeranylation"/>
    <property type="evidence" value="ECO:0000250"/>
    <property type="project" value="UniProtKB"/>
</dbReference>
<dbReference type="FunFam" id="1.25.40.120:FF:000035">
    <property type="entry name" value="Geranylgeranyl transferase type-2 subunit alpha"/>
    <property type="match status" value="2"/>
</dbReference>
<dbReference type="FunFam" id="2.60.40.1130:FF:000001">
    <property type="entry name" value="Geranylgeranyl transferase type-2 subunit alpha"/>
    <property type="match status" value="1"/>
</dbReference>
<dbReference type="FunFam" id="3.80.10.10:FF:000138">
    <property type="entry name" value="geranylgeranyl transferase type-2 subunit alpha"/>
    <property type="match status" value="1"/>
</dbReference>
<dbReference type="Gene3D" id="1.25.40.120">
    <property type="entry name" value="Protein prenylyltransferase"/>
    <property type="match status" value="1"/>
</dbReference>
<dbReference type="Gene3D" id="2.60.40.1130">
    <property type="entry name" value="Rab geranylgeranyltransferase alpha-subunit, insert domain"/>
    <property type="match status" value="1"/>
</dbReference>
<dbReference type="Gene3D" id="3.80.10.10">
    <property type="entry name" value="Ribonuclease Inhibitor"/>
    <property type="match status" value="1"/>
</dbReference>
<dbReference type="InterPro" id="IPR001611">
    <property type="entry name" value="Leu-rich_rpt"/>
</dbReference>
<dbReference type="InterPro" id="IPR032675">
    <property type="entry name" value="LRR_dom_sf"/>
</dbReference>
<dbReference type="InterPro" id="IPR002088">
    <property type="entry name" value="Prenyl_trans_a"/>
</dbReference>
<dbReference type="InterPro" id="IPR036254">
    <property type="entry name" value="RabGGT_asu_insert-dom_sf"/>
</dbReference>
<dbReference type="InterPro" id="IPR009087">
    <property type="entry name" value="RabGGT_asu_insert-domain"/>
</dbReference>
<dbReference type="PANTHER" id="PTHR11129:SF2">
    <property type="entry name" value="GERANYLGERANYL TRANSFERASE TYPE-2 SUBUNIT ALPHA"/>
    <property type="match status" value="1"/>
</dbReference>
<dbReference type="PANTHER" id="PTHR11129">
    <property type="entry name" value="PROTEIN FARNESYLTRANSFERASE ALPHA SUBUNIT/RAB GERANYLGERANYL TRANSFERASE ALPHA SUBUNIT"/>
    <property type="match status" value="1"/>
</dbReference>
<dbReference type="Pfam" id="PF00560">
    <property type="entry name" value="LRR_1"/>
    <property type="match status" value="1"/>
</dbReference>
<dbReference type="Pfam" id="PF01239">
    <property type="entry name" value="PPTA"/>
    <property type="match status" value="5"/>
</dbReference>
<dbReference type="Pfam" id="PF07711">
    <property type="entry name" value="RabGGT_insert"/>
    <property type="match status" value="1"/>
</dbReference>
<dbReference type="SUPFAM" id="SSF52075">
    <property type="entry name" value="Outer arm dynein light chain 1"/>
    <property type="match status" value="1"/>
</dbReference>
<dbReference type="SUPFAM" id="SSF48439">
    <property type="entry name" value="Protein prenylyltransferase"/>
    <property type="match status" value="1"/>
</dbReference>
<dbReference type="SUPFAM" id="SSF49594">
    <property type="entry name" value="Rab geranylgeranyltransferase alpha-subunit, insert domain"/>
    <property type="match status" value="1"/>
</dbReference>
<dbReference type="PROSITE" id="PS51450">
    <property type="entry name" value="LRR"/>
    <property type="match status" value="5"/>
</dbReference>
<dbReference type="PROSITE" id="PS51147">
    <property type="entry name" value="PFTA"/>
    <property type="match status" value="6"/>
</dbReference>
<evidence type="ECO:0000250" key="1"/>
<evidence type="ECO:0000250" key="2">
    <source>
        <dbReference type="UniProtKB" id="Q92696"/>
    </source>
</evidence>
<evidence type="ECO:0000250" key="3">
    <source>
        <dbReference type="UniProtKB" id="Q9JHK4"/>
    </source>
</evidence>
<evidence type="ECO:0000305" key="4"/>
<feature type="chain" id="PRO_0000229771" description="Geranylgeranyl transferase type-2 subunit alpha">
    <location>
        <begin position="1"/>
        <end position="567"/>
    </location>
</feature>
<feature type="repeat" description="PFTA 1">
    <location>
        <begin position="44"/>
        <end position="78"/>
    </location>
</feature>
<feature type="repeat" description="PFTA 2">
    <location>
        <begin position="88"/>
        <end position="122"/>
    </location>
</feature>
<feature type="repeat" description="PFTA 3">
    <location>
        <begin position="124"/>
        <end position="158"/>
    </location>
</feature>
<feature type="repeat" description="PFTA 4">
    <location>
        <begin position="159"/>
        <end position="193"/>
    </location>
</feature>
<feature type="repeat" description="PFTA 5">
    <location>
        <begin position="207"/>
        <end position="241"/>
    </location>
</feature>
<feature type="repeat" description="PFTA 6">
    <location>
        <begin position="363"/>
        <end position="397"/>
    </location>
</feature>
<feature type="repeat" description="LRR 1">
    <location>
        <begin position="442"/>
        <end position="463"/>
    </location>
</feature>
<feature type="repeat" description="LRR 2">
    <location>
        <begin position="464"/>
        <end position="486"/>
    </location>
</feature>
<feature type="repeat" description="LRR 3">
    <location>
        <begin position="487"/>
        <end position="508"/>
    </location>
</feature>
<feature type="repeat" description="LRR 4">
    <location>
        <begin position="509"/>
        <end position="530"/>
    </location>
</feature>
<feature type="repeat" description="LRR 5">
    <location>
        <begin position="534"/>
        <end position="555"/>
    </location>
</feature>
<feature type="modified residue" description="Phosphoserine" evidence="3">
    <location>
        <position position="98"/>
    </location>
</feature>
<sequence>MHGRLKVKTSEEQAEAKRLEREQKLKLYQSATQAVFQKRQAGELDESVLELTSQILGANPDFATLWNCRREVLQQLETQKSPEELAALVKAELGFLESCLRVNPKSYGTWHHRCWLLGRLPEPNWTRELELCARFLEVDERNFHCWDYRRFVATQAAVPPAEELAFTDSLITRNFSNYSSWHYRSCLLPQLHPQPDSGPQGRLPEDVLLKELELVQNAFFTDPNDQSAWFYHRWLLGRADPQDALRCLHVSREEACLTVSFSRPLLVGSRTEILLLMVDDSPLIVEWRTPDGRNRPSHVWLCDLPAASLNDQLPQHTFRVIWTAGDVQKECVLLKGRQEGWCRDSTTDEQLFRCELSVEKSTVLQSELESCKELQELEPENKWCLLTIILLMRALDPLLYEKETLRYFQTLKAVDPMRAAYLDDLRSKFLLENSVLKMEYAEVRVLHLAHKDLTVLCHLEQLLLVTHLDLSHNRLRTLPPALAALRCLEVLQASDNAIESLDGVTNLPRLQELLLCNNRLQRPAVLQPLASCPRLVLLNLQGNPLCQAVGILEQLAELPPSVNSILT</sequence>
<protein>
    <recommendedName>
        <fullName>Geranylgeranyl transferase type-2 subunit alpha</fullName>
        <ecNumber>2.5.1.60</ecNumber>
    </recommendedName>
    <alternativeName>
        <fullName>Geranylgeranyl transferase type II subunit alpha</fullName>
    </alternativeName>
    <alternativeName>
        <fullName>Rab geranyl-geranyltransferase subunit alpha</fullName>
        <shortName>Rab GG transferase alpha</shortName>
        <shortName>Rab GGTase alpha</shortName>
    </alternativeName>
    <alternativeName>
        <fullName>Rab geranylgeranyltransferase subunit alpha</fullName>
    </alternativeName>
</protein>
<proteinExistence type="evidence at transcript level"/>
<accession>Q5NVK5</accession>